<evidence type="ECO:0000255" key="1">
    <source>
        <dbReference type="HAMAP-Rule" id="MF_00038"/>
    </source>
</evidence>
<gene>
    <name evidence="1" type="primary">mraY</name>
    <name type="ordered locus">MCA2432</name>
</gene>
<proteinExistence type="inferred from homology"/>
<feature type="chain" id="PRO_0000108852" description="Phospho-N-acetylmuramoyl-pentapeptide-transferase">
    <location>
        <begin position="1"/>
        <end position="360"/>
    </location>
</feature>
<feature type="transmembrane region" description="Helical" evidence="1">
    <location>
        <begin position="21"/>
        <end position="41"/>
    </location>
</feature>
<feature type="transmembrane region" description="Helical" evidence="1">
    <location>
        <begin position="70"/>
        <end position="90"/>
    </location>
</feature>
<feature type="transmembrane region" description="Helical" evidence="1">
    <location>
        <begin position="97"/>
        <end position="117"/>
    </location>
</feature>
<feature type="transmembrane region" description="Helical" evidence="1">
    <location>
        <begin position="134"/>
        <end position="154"/>
    </location>
</feature>
<feature type="transmembrane region" description="Helical" evidence="1">
    <location>
        <begin position="168"/>
        <end position="188"/>
    </location>
</feature>
<feature type="transmembrane region" description="Helical" evidence="1">
    <location>
        <begin position="199"/>
        <end position="219"/>
    </location>
</feature>
<feature type="transmembrane region" description="Helical" evidence="1">
    <location>
        <begin position="236"/>
        <end position="256"/>
    </location>
</feature>
<feature type="transmembrane region" description="Helical" evidence="1">
    <location>
        <begin position="263"/>
        <end position="283"/>
    </location>
</feature>
<feature type="transmembrane region" description="Helical" evidence="1">
    <location>
        <begin position="288"/>
        <end position="308"/>
    </location>
</feature>
<feature type="transmembrane region" description="Helical" evidence="1">
    <location>
        <begin position="338"/>
        <end position="358"/>
    </location>
</feature>
<keyword id="KW-0131">Cell cycle</keyword>
<keyword id="KW-0132">Cell division</keyword>
<keyword id="KW-0997">Cell inner membrane</keyword>
<keyword id="KW-1003">Cell membrane</keyword>
<keyword id="KW-0133">Cell shape</keyword>
<keyword id="KW-0961">Cell wall biogenesis/degradation</keyword>
<keyword id="KW-0460">Magnesium</keyword>
<keyword id="KW-0472">Membrane</keyword>
<keyword id="KW-0479">Metal-binding</keyword>
<keyword id="KW-0573">Peptidoglycan synthesis</keyword>
<keyword id="KW-1185">Reference proteome</keyword>
<keyword id="KW-0808">Transferase</keyword>
<keyword id="KW-0812">Transmembrane</keyword>
<keyword id="KW-1133">Transmembrane helix</keyword>
<protein>
    <recommendedName>
        <fullName evidence="1">Phospho-N-acetylmuramoyl-pentapeptide-transferase</fullName>
        <ecNumber evidence="1">2.7.8.13</ecNumber>
    </recommendedName>
    <alternativeName>
        <fullName evidence="1">UDP-MurNAc-pentapeptide phosphotransferase</fullName>
    </alternativeName>
</protein>
<reference key="1">
    <citation type="journal article" date="2004" name="PLoS Biol.">
        <title>Genomic insights into methanotrophy: the complete genome sequence of Methylococcus capsulatus (Bath).</title>
        <authorList>
            <person name="Ward N.L."/>
            <person name="Larsen O."/>
            <person name="Sakwa J."/>
            <person name="Bruseth L."/>
            <person name="Khouri H.M."/>
            <person name="Durkin A.S."/>
            <person name="Dimitrov G."/>
            <person name="Jiang L."/>
            <person name="Scanlan D."/>
            <person name="Kang K.H."/>
            <person name="Lewis M.R."/>
            <person name="Nelson K.E."/>
            <person name="Methe B.A."/>
            <person name="Wu M."/>
            <person name="Heidelberg J.F."/>
            <person name="Paulsen I.T."/>
            <person name="Fouts D.E."/>
            <person name="Ravel J."/>
            <person name="Tettelin H."/>
            <person name="Ren Q."/>
            <person name="Read T.D."/>
            <person name="DeBoy R.T."/>
            <person name="Seshadri R."/>
            <person name="Salzberg S.L."/>
            <person name="Jensen H.B."/>
            <person name="Birkeland N.K."/>
            <person name="Nelson W.C."/>
            <person name="Dodson R.J."/>
            <person name="Grindhaug S.H."/>
            <person name="Holt I.E."/>
            <person name="Eidhammer I."/>
            <person name="Jonasen I."/>
            <person name="Vanaken S."/>
            <person name="Utterback T.R."/>
            <person name="Feldblyum T.V."/>
            <person name="Fraser C.M."/>
            <person name="Lillehaug J.R."/>
            <person name="Eisen J.A."/>
        </authorList>
    </citation>
    <scope>NUCLEOTIDE SEQUENCE [LARGE SCALE GENOMIC DNA]</scope>
    <source>
        <strain>ATCC 33009 / NCIMB 11132 / Bath</strain>
    </source>
</reference>
<sequence>MLLILANWLEHYFDVFRVFHYLTLRGILGILTALVISFIVGPPMIRYLGSYKIGQTIRDDGPQSHLSKAGTPTMGGALILVTITVSTLLWSDLGNRYVWAVLLVTLAYGLIGFVDDYKKLVLKNSKGLAARYKYLWQSVFGLGAALFLYHTASSPQETQFIVPFFKQVVLNMGWLYVPLVYFVVVGSSNAVNLTDGLDGLAILPTVLVAGGLAIFAYASGHSEFSEYLGIPYLPKAGELVVFCGALVGAGLGFLWFNTYPAQVFMGDIGALALGAALGMVAVLVRQEIVLMIMGGIFVMETVSVMLQVLSFKLTGRRIFRMAPIHHHFELKGWPEPRVIVRFWIISVILVLIGLATLKLR</sequence>
<organism>
    <name type="scientific">Methylococcus capsulatus (strain ATCC 33009 / NCIMB 11132 / Bath)</name>
    <dbReference type="NCBI Taxonomy" id="243233"/>
    <lineage>
        <taxon>Bacteria</taxon>
        <taxon>Pseudomonadati</taxon>
        <taxon>Pseudomonadota</taxon>
        <taxon>Gammaproteobacteria</taxon>
        <taxon>Methylococcales</taxon>
        <taxon>Methylococcaceae</taxon>
        <taxon>Methylococcus</taxon>
    </lineage>
</organism>
<name>MRAY_METCA</name>
<accession>Q604V4</accession>
<comment type="function">
    <text evidence="1">Catalyzes the initial step of the lipid cycle reactions in the biosynthesis of the cell wall peptidoglycan: transfers peptidoglycan precursor phospho-MurNAc-pentapeptide from UDP-MurNAc-pentapeptide onto the lipid carrier undecaprenyl phosphate, yielding undecaprenyl-pyrophosphoryl-MurNAc-pentapeptide, known as lipid I.</text>
</comment>
<comment type="catalytic activity">
    <reaction evidence="1">
        <text>UDP-N-acetyl-alpha-D-muramoyl-L-alanyl-gamma-D-glutamyl-meso-2,6-diaminopimeloyl-D-alanyl-D-alanine + di-trans,octa-cis-undecaprenyl phosphate = di-trans,octa-cis-undecaprenyl diphospho-N-acetyl-alpha-D-muramoyl-L-alanyl-D-glutamyl-meso-2,6-diaminopimeloyl-D-alanyl-D-alanine + UMP</text>
        <dbReference type="Rhea" id="RHEA:28386"/>
        <dbReference type="ChEBI" id="CHEBI:57865"/>
        <dbReference type="ChEBI" id="CHEBI:60392"/>
        <dbReference type="ChEBI" id="CHEBI:61386"/>
        <dbReference type="ChEBI" id="CHEBI:61387"/>
        <dbReference type="EC" id="2.7.8.13"/>
    </reaction>
</comment>
<comment type="cofactor">
    <cofactor evidence="1">
        <name>Mg(2+)</name>
        <dbReference type="ChEBI" id="CHEBI:18420"/>
    </cofactor>
</comment>
<comment type="pathway">
    <text evidence="1">Cell wall biogenesis; peptidoglycan biosynthesis.</text>
</comment>
<comment type="subcellular location">
    <subcellularLocation>
        <location evidence="1">Cell inner membrane</location>
        <topology evidence="1">Multi-pass membrane protein</topology>
    </subcellularLocation>
</comment>
<comment type="similarity">
    <text evidence="1">Belongs to the glycosyltransferase 4 family. MraY subfamily.</text>
</comment>
<dbReference type="EC" id="2.7.8.13" evidence="1"/>
<dbReference type="EMBL" id="AE017282">
    <property type="protein sequence ID" value="AAU91467.1"/>
    <property type="molecule type" value="Genomic_DNA"/>
</dbReference>
<dbReference type="RefSeq" id="WP_010961657.1">
    <property type="nucleotide sequence ID" value="NC_002977.6"/>
</dbReference>
<dbReference type="SMR" id="Q604V4"/>
<dbReference type="STRING" id="243233.MCA2432"/>
<dbReference type="GeneID" id="88224633"/>
<dbReference type="KEGG" id="mca:MCA2432"/>
<dbReference type="eggNOG" id="COG0472">
    <property type="taxonomic scope" value="Bacteria"/>
</dbReference>
<dbReference type="HOGENOM" id="CLU_023982_0_0_6"/>
<dbReference type="UniPathway" id="UPA00219"/>
<dbReference type="Proteomes" id="UP000006821">
    <property type="component" value="Chromosome"/>
</dbReference>
<dbReference type="GO" id="GO:0005886">
    <property type="term" value="C:plasma membrane"/>
    <property type="evidence" value="ECO:0007669"/>
    <property type="project" value="UniProtKB-SubCell"/>
</dbReference>
<dbReference type="GO" id="GO:0046872">
    <property type="term" value="F:metal ion binding"/>
    <property type="evidence" value="ECO:0007669"/>
    <property type="project" value="UniProtKB-KW"/>
</dbReference>
<dbReference type="GO" id="GO:0008963">
    <property type="term" value="F:phospho-N-acetylmuramoyl-pentapeptide-transferase activity"/>
    <property type="evidence" value="ECO:0007669"/>
    <property type="project" value="UniProtKB-UniRule"/>
</dbReference>
<dbReference type="GO" id="GO:0051992">
    <property type="term" value="F:UDP-N-acetylmuramoyl-L-alanyl-D-glutamyl-meso-2,6-diaminopimelyl-D-alanyl-D-alanine:undecaprenyl-phosphate transferase activity"/>
    <property type="evidence" value="ECO:0007669"/>
    <property type="project" value="RHEA"/>
</dbReference>
<dbReference type="GO" id="GO:0051301">
    <property type="term" value="P:cell division"/>
    <property type="evidence" value="ECO:0007669"/>
    <property type="project" value="UniProtKB-KW"/>
</dbReference>
<dbReference type="GO" id="GO:0071555">
    <property type="term" value="P:cell wall organization"/>
    <property type="evidence" value="ECO:0007669"/>
    <property type="project" value="UniProtKB-KW"/>
</dbReference>
<dbReference type="GO" id="GO:0009252">
    <property type="term" value="P:peptidoglycan biosynthetic process"/>
    <property type="evidence" value="ECO:0007669"/>
    <property type="project" value="UniProtKB-UniRule"/>
</dbReference>
<dbReference type="GO" id="GO:0008360">
    <property type="term" value="P:regulation of cell shape"/>
    <property type="evidence" value="ECO:0007669"/>
    <property type="project" value="UniProtKB-KW"/>
</dbReference>
<dbReference type="CDD" id="cd06852">
    <property type="entry name" value="GT_MraY"/>
    <property type="match status" value="1"/>
</dbReference>
<dbReference type="HAMAP" id="MF_00038">
    <property type="entry name" value="MraY"/>
    <property type="match status" value="1"/>
</dbReference>
<dbReference type="InterPro" id="IPR000715">
    <property type="entry name" value="Glycosyl_transferase_4"/>
</dbReference>
<dbReference type="InterPro" id="IPR003524">
    <property type="entry name" value="PNAcMuramoyl-5peptid_Trfase"/>
</dbReference>
<dbReference type="InterPro" id="IPR018480">
    <property type="entry name" value="PNAcMuramoyl-5peptid_Trfase_CS"/>
</dbReference>
<dbReference type="NCBIfam" id="TIGR00445">
    <property type="entry name" value="mraY"/>
    <property type="match status" value="1"/>
</dbReference>
<dbReference type="PANTHER" id="PTHR22926">
    <property type="entry name" value="PHOSPHO-N-ACETYLMURAMOYL-PENTAPEPTIDE-TRANSFERASE"/>
    <property type="match status" value="1"/>
</dbReference>
<dbReference type="PANTHER" id="PTHR22926:SF5">
    <property type="entry name" value="PHOSPHO-N-ACETYLMURAMOYL-PENTAPEPTIDE-TRANSFERASE HOMOLOG"/>
    <property type="match status" value="1"/>
</dbReference>
<dbReference type="Pfam" id="PF00953">
    <property type="entry name" value="Glycos_transf_4"/>
    <property type="match status" value="1"/>
</dbReference>
<dbReference type="Pfam" id="PF10555">
    <property type="entry name" value="MraY_sig1"/>
    <property type="match status" value="1"/>
</dbReference>
<dbReference type="PROSITE" id="PS01347">
    <property type="entry name" value="MRAY_1"/>
    <property type="match status" value="1"/>
</dbReference>
<dbReference type="PROSITE" id="PS01348">
    <property type="entry name" value="MRAY_2"/>
    <property type="match status" value="1"/>
</dbReference>